<feature type="chain" id="PRO_0000231205" description="UDP-N-acetylglucosamine 1-carboxyvinyltransferase 2">
    <location>
        <begin position="1"/>
        <end position="428"/>
    </location>
</feature>
<feature type="active site" description="Proton donor" evidence="1">
    <location>
        <position position="116"/>
    </location>
</feature>
<feature type="binding site" evidence="1">
    <location>
        <begin position="22"/>
        <end position="23"/>
    </location>
    <ligand>
        <name>phosphoenolpyruvate</name>
        <dbReference type="ChEBI" id="CHEBI:58702"/>
    </ligand>
</feature>
<feature type="binding site" evidence="1">
    <location>
        <position position="92"/>
    </location>
    <ligand>
        <name>UDP-N-acetyl-alpha-D-glucosamine</name>
        <dbReference type="ChEBI" id="CHEBI:57705"/>
    </ligand>
</feature>
<feature type="binding site" evidence="1">
    <location>
        <begin position="121"/>
        <end position="125"/>
    </location>
    <ligand>
        <name>UDP-N-acetyl-alpha-D-glucosamine</name>
        <dbReference type="ChEBI" id="CHEBI:57705"/>
    </ligand>
</feature>
<feature type="binding site" evidence="1">
    <location>
        <position position="304"/>
    </location>
    <ligand>
        <name>UDP-N-acetyl-alpha-D-glucosamine</name>
        <dbReference type="ChEBI" id="CHEBI:57705"/>
    </ligand>
</feature>
<feature type="binding site" evidence="1">
    <location>
        <position position="326"/>
    </location>
    <ligand>
        <name>UDP-N-acetyl-alpha-D-glucosamine</name>
        <dbReference type="ChEBI" id="CHEBI:57705"/>
    </ligand>
</feature>
<feature type="modified residue" description="2-(S-cysteinyl)pyruvic acid O-phosphothioketal" evidence="1">
    <location>
        <position position="116"/>
    </location>
</feature>
<reference key="1">
    <citation type="journal article" date="2004" name="Nucleic Acids Res.">
        <title>Thermoadaptation trait revealed by the genome sequence of thermophilic Geobacillus kaustophilus.</title>
        <authorList>
            <person name="Takami H."/>
            <person name="Takaki Y."/>
            <person name="Chee G.-J."/>
            <person name="Nishi S."/>
            <person name="Shimamura S."/>
            <person name="Suzuki H."/>
            <person name="Matsui S."/>
            <person name="Uchiyama I."/>
        </authorList>
    </citation>
    <scope>NUCLEOTIDE SEQUENCE [LARGE SCALE GENOMIC DNA]</scope>
    <source>
        <strain>HTA426</strain>
    </source>
</reference>
<organism>
    <name type="scientific">Geobacillus kaustophilus (strain HTA426)</name>
    <dbReference type="NCBI Taxonomy" id="235909"/>
    <lineage>
        <taxon>Bacteria</taxon>
        <taxon>Bacillati</taxon>
        <taxon>Bacillota</taxon>
        <taxon>Bacilli</taxon>
        <taxon>Bacillales</taxon>
        <taxon>Anoxybacillaceae</taxon>
        <taxon>Geobacillus</taxon>
        <taxon>Geobacillus thermoleovorans group</taxon>
    </lineage>
</organism>
<accession>Q5KUG7</accession>
<dbReference type="EC" id="2.5.1.7" evidence="1"/>
<dbReference type="EMBL" id="BA000043">
    <property type="protein sequence ID" value="BAD77669.1"/>
    <property type="molecule type" value="Genomic_DNA"/>
</dbReference>
<dbReference type="RefSeq" id="WP_011232851.1">
    <property type="nucleotide sequence ID" value="NC_006510.1"/>
</dbReference>
<dbReference type="SMR" id="Q5KUG7"/>
<dbReference type="STRING" id="235909.GK3384"/>
<dbReference type="KEGG" id="gka:GK3384"/>
<dbReference type="eggNOG" id="COG0766">
    <property type="taxonomic scope" value="Bacteria"/>
</dbReference>
<dbReference type="HOGENOM" id="CLU_027387_0_0_9"/>
<dbReference type="UniPathway" id="UPA00219"/>
<dbReference type="Proteomes" id="UP000001172">
    <property type="component" value="Chromosome"/>
</dbReference>
<dbReference type="GO" id="GO:0005737">
    <property type="term" value="C:cytoplasm"/>
    <property type="evidence" value="ECO:0007669"/>
    <property type="project" value="UniProtKB-SubCell"/>
</dbReference>
<dbReference type="GO" id="GO:0008760">
    <property type="term" value="F:UDP-N-acetylglucosamine 1-carboxyvinyltransferase activity"/>
    <property type="evidence" value="ECO:0007669"/>
    <property type="project" value="UniProtKB-UniRule"/>
</dbReference>
<dbReference type="GO" id="GO:0051301">
    <property type="term" value="P:cell division"/>
    <property type="evidence" value="ECO:0007669"/>
    <property type="project" value="UniProtKB-KW"/>
</dbReference>
<dbReference type="GO" id="GO:0071555">
    <property type="term" value="P:cell wall organization"/>
    <property type="evidence" value="ECO:0007669"/>
    <property type="project" value="UniProtKB-KW"/>
</dbReference>
<dbReference type="GO" id="GO:0009252">
    <property type="term" value="P:peptidoglycan biosynthetic process"/>
    <property type="evidence" value="ECO:0007669"/>
    <property type="project" value="UniProtKB-UniRule"/>
</dbReference>
<dbReference type="GO" id="GO:0008360">
    <property type="term" value="P:regulation of cell shape"/>
    <property type="evidence" value="ECO:0007669"/>
    <property type="project" value="UniProtKB-KW"/>
</dbReference>
<dbReference type="GO" id="GO:0019277">
    <property type="term" value="P:UDP-N-acetylgalactosamine biosynthetic process"/>
    <property type="evidence" value="ECO:0007669"/>
    <property type="project" value="InterPro"/>
</dbReference>
<dbReference type="CDD" id="cd01555">
    <property type="entry name" value="UdpNAET"/>
    <property type="match status" value="1"/>
</dbReference>
<dbReference type="Gene3D" id="3.65.10.10">
    <property type="entry name" value="Enolpyruvate transferase domain"/>
    <property type="match status" value="2"/>
</dbReference>
<dbReference type="HAMAP" id="MF_00111">
    <property type="entry name" value="MurA"/>
    <property type="match status" value="1"/>
</dbReference>
<dbReference type="InterPro" id="IPR001986">
    <property type="entry name" value="Enolpyruvate_Tfrase_dom"/>
</dbReference>
<dbReference type="InterPro" id="IPR036968">
    <property type="entry name" value="Enolpyruvate_Tfrase_sf"/>
</dbReference>
<dbReference type="InterPro" id="IPR050068">
    <property type="entry name" value="MurA_subfamily"/>
</dbReference>
<dbReference type="InterPro" id="IPR013792">
    <property type="entry name" value="RNA3'P_cycl/enolpyr_Trfase_a/b"/>
</dbReference>
<dbReference type="InterPro" id="IPR005750">
    <property type="entry name" value="UDP_GlcNAc_COvinyl_MurA"/>
</dbReference>
<dbReference type="NCBIfam" id="TIGR01072">
    <property type="entry name" value="murA"/>
    <property type="match status" value="1"/>
</dbReference>
<dbReference type="NCBIfam" id="NF006873">
    <property type="entry name" value="PRK09369.1"/>
    <property type="match status" value="1"/>
</dbReference>
<dbReference type="NCBIfam" id="NF009470">
    <property type="entry name" value="PRK12830.1"/>
    <property type="match status" value="1"/>
</dbReference>
<dbReference type="PANTHER" id="PTHR43783">
    <property type="entry name" value="UDP-N-ACETYLGLUCOSAMINE 1-CARBOXYVINYLTRANSFERASE"/>
    <property type="match status" value="1"/>
</dbReference>
<dbReference type="PANTHER" id="PTHR43783:SF2">
    <property type="entry name" value="UDP-N-ACETYLGLUCOSAMINE 1-CARBOXYVINYLTRANSFERASE 2"/>
    <property type="match status" value="1"/>
</dbReference>
<dbReference type="Pfam" id="PF00275">
    <property type="entry name" value="EPSP_synthase"/>
    <property type="match status" value="1"/>
</dbReference>
<dbReference type="SUPFAM" id="SSF55205">
    <property type="entry name" value="EPT/RTPC-like"/>
    <property type="match status" value="1"/>
</dbReference>
<sequence length="428" mass="45536">MDKMKIIGGDRLRGTIKVSGAKNSAVALIPAAILADSPVTIEGLPDISDVHILGSLIEEIGGSFSFDGKEAVIDPTNMVSMPLPNGKVKKLRASYYLMGAMLGRFKRAVVGLPGGCHLGPRPIDQHIKGFEALGATVTNEQGAIYLRAEELRGARIFLDVVSVGATINIMLAAVRAKGRTIIENAAKEPEIIDVATLLSNMGAKIKGAGTDVIRIDGVEKLSGCRHAIIPDRIEAGTYMIAAAATNGEVVVDNVIPQHVESLTAKLREMGVRVETGEDQILVCGTDVLKAVDVKTLVYPGFPTDLQQPFTALLTKANGTSVVTDTIYSARFKHVDELRRMNANVKVEGRSAIVTGPVKLQGAKVKASDLRAGAALVIAGLMAEGVTEITGVEHIDRGYSNLVEKLSDIGATIWREKMTDEEIEQVKNA</sequence>
<name>MURA2_GEOKA</name>
<proteinExistence type="inferred from homology"/>
<gene>
    <name evidence="1" type="primary">murA2</name>
    <name type="ordered locus">GK3384</name>
</gene>
<keyword id="KW-0131">Cell cycle</keyword>
<keyword id="KW-0132">Cell division</keyword>
<keyword id="KW-0133">Cell shape</keyword>
<keyword id="KW-0961">Cell wall biogenesis/degradation</keyword>
<keyword id="KW-0963">Cytoplasm</keyword>
<keyword id="KW-0573">Peptidoglycan synthesis</keyword>
<keyword id="KW-0670">Pyruvate</keyword>
<keyword id="KW-1185">Reference proteome</keyword>
<keyword id="KW-0808">Transferase</keyword>
<protein>
    <recommendedName>
        <fullName evidence="1">UDP-N-acetylglucosamine 1-carboxyvinyltransferase 2</fullName>
        <ecNumber evidence="1">2.5.1.7</ecNumber>
    </recommendedName>
    <alternativeName>
        <fullName evidence="1">Enoylpyruvate transferase 2</fullName>
    </alternativeName>
    <alternativeName>
        <fullName evidence="1">UDP-N-acetylglucosamine enolpyruvyl transferase 2</fullName>
        <shortName evidence="1">EPT 2</shortName>
    </alternativeName>
</protein>
<comment type="function">
    <text evidence="1">Cell wall formation. Adds enolpyruvyl to UDP-N-acetylglucosamine.</text>
</comment>
<comment type="catalytic activity">
    <reaction evidence="1">
        <text>phosphoenolpyruvate + UDP-N-acetyl-alpha-D-glucosamine = UDP-N-acetyl-3-O-(1-carboxyvinyl)-alpha-D-glucosamine + phosphate</text>
        <dbReference type="Rhea" id="RHEA:18681"/>
        <dbReference type="ChEBI" id="CHEBI:43474"/>
        <dbReference type="ChEBI" id="CHEBI:57705"/>
        <dbReference type="ChEBI" id="CHEBI:58702"/>
        <dbReference type="ChEBI" id="CHEBI:68483"/>
        <dbReference type="EC" id="2.5.1.7"/>
    </reaction>
</comment>
<comment type="pathway">
    <text evidence="1">Cell wall biogenesis; peptidoglycan biosynthesis.</text>
</comment>
<comment type="subcellular location">
    <subcellularLocation>
        <location evidence="1">Cytoplasm</location>
    </subcellularLocation>
</comment>
<comment type="similarity">
    <text evidence="1">Belongs to the EPSP synthase family. MurA subfamily.</text>
</comment>
<evidence type="ECO:0000255" key="1">
    <source>
        <dbReference type="HAMAP-Rule" id="MF_00111"/>
    </source>
</evidence>